<feature type="initiator methionine" description="Removed" evidence="2">
    <location>
        <position position="1"/>
    </location>
</feature>
<feature type="chain" id="PRO_0000286045" description="Elongation factor 1-gamma">
    <location>
        <begin position="2"/>
        <end position="437"/>
    </location>
</feature>
<feature type="domain" description="GST N-terminal">
    <location>
        <begin position="2"/>
        <end position="87"/>
    </location>
</feature>
<feature type="domain" description="GST C-terminal">
    <location>
        <begin position="88"/>
        <end position="216"/>
    </location>
</feature>
<feature type="domain" description="EF-1-gamma C-terminal" evidence="4">
    <location>
        <begin position="276"/>
        <end position="437"/>
    </location>
</feature>
<feature type="region of interest" description="Disordered" evidence="5">
    <location>
        <begin position="221"/>
        <end position="268"/>
    </location>
</feature>
<feature type="compositionally biased region" description="Basic and acidic residues" evidence="5">
    <location>
        <begin position="221"/>
        <end position="254"/>
    </location>
</feature>
<feature type="modified residue" description="N-acetylalanine" evidence="2">
    <location>
        <position position="2"/>
    </location>
</feature>
<feature type="modified residue" description="N6-acetyllysine" evidence="2">
    <location>
        <position position="147"/>
    </location>
</feature>
<feature type="modified residue" description="N6-acetyllysine" evidence="3">
    <location>
        <position position="212"/>
    </location>
</feature>
<feature type="modified residue" description="N6-acetyllysine" evidence="3">
    <location>
        <position position="401"/>
    </location>
</feature>
<feature type="modified residue" description="N6-acetyllysine; alternate" evidence="2">
    <location>
        <position position="434"/>
    </location>
</feature>
<feature type="modified residue" description="N6-malonyllysine; alternate" evidence="1">
    <location>
        <position position="434"/>
    </location>
</feature>
<feature type="cross-link" description="Glycyl lysine isopeptide (Lys-Gly) (interchain with G-Cter in SUMO1)" evidence="2">
    <location>
        <position position="253"/>
    </location>
</feature>
<feature type="cross-link" description="Glycyl lysine isopeptide (Lys-Gly) (interchain with G-Cter in SUMO2)" evidence="2">
    <location>
        <position position="285"/>
    </location>
</feature>
<protein>
    <recommendedName>
        <fullName>Elongation factor 1-gamma</fullName>
        <shortName>EF-1-gamma</shortName>
    </recommendedName>
    <alternativeName>
        <fullName>eEF-1B gamma</fullName>
    </alternativeName>
</protein>
<comment type="function">
    <text evidence="1">Probably plays a role in anchoring the complex to other cellular components.</text>
</comment>
<comment type="subunit">
    <text evidence="1">EF-1 is composed of four subunits: alpha, beta, delta, and gamma.</text>
</comment>
<reference key="1">
    <citation type="submission" date="2007-02" db="EMBL/GenBank/DDBJ databases">
        <title>Cloning of genes expressed in equine tendon.</title>
        <authorList>
            <person name="Hasegawa T."/>
            <person name="Hayashi K."/>
            <person name="Kagawa Y."/>
            <person name="Akiyama Y."/>
            <person name="Suzuki Y."/>
            <person name="Sugano S."/>
            <person name="Ishida N."/>
        </authorList>
    </citation>
    <scope>NUCLEOTIDE SEQUENCE [MRNA]</scope>
    <source>
        <strain>Thoroughbred</strain>
        <tissue>Tendon</tissue>
    </source>
</reference>
<sequence>MAAGTLYTYPENWRAFKALIAAQYSGAQVRVLSAPPHFHFGQTNRTPEFLRKFPAGKVPAFEGDDGFCVFESNAIAYYVSNEELRGSTPEAAAQVVQWVSFADSDIVPPASTWVFPTLGIMHHNKQATENAKEEVRRILGLLDAHLKTRTFLVGERVTLADITVVCTLLWLYKQVLEPSFRQAFPNTNRWFLTCINQPQFRAVLGEVKLCEKMAQFDAKKFAESQPKKDTPRKEKGSREEKQKPQAERKEEKKAAAPAPEEEMDECEQALAAEPKAKDPFAHLPKSTFVLDEFKRKYSNEDTLSVALPYFWEHFDKDGWSLWYSEYRFPEELTQTFMSCNLITGMFQRLDKLRKNAFASVILFGTNNSSSISGVWVFRGQELAFPLSPDWQVDYESYTWRKLDPGSEEAQTLVREYFSWEGAFQHVGKAFNQGKIFK</sequence>
<proteinExistence type="evidence at transcript level"/>
<keyword id="KW-0007">Acetylation</keyword>
<keyword id="KW-0251">Elongation factor</keyword>
<keyword id="KW-1017">Isopeptide bond</keyword>
<keyword id="KW-0648">Protein biosynthesis</keyword>
<keyword id="KW-1185">Reference proteome</keyword>
<keyword id="KW-0832">Ubl conjugation</keyword>
<gene>
    <name type="primary">EEF1G</name>
</gene>
<accession>A2Q127</accession>
<dbReference type="EMBL" id="AB292250">
    <property type="protein sequence ID" value="BAF46268.1"/>
    <property type="molecule type" value="mRNA"/>
</dbReference>
<dbReference type="RefSeq" id="NP_001075254.1">
    <property type="nucleotide sequence ID" value="NM_001081785.1"/>
</dbReference>
<dbReference type="BMRB" id="A2Q127"/>
<dbReference type="SMR" id="A2Q127"/>
<dbReference type="FunCoup" id="A2Q127">
    <property type="interactions" value="2077"/>
</dbReference>
<dbReference type="STRING" id="9796.ENSECAP00000012558"/>
<dbReference type="PaxDb" id="9796-ENSECAP00000012558"/>
<dbReference type="PeptideAtlas" id="A2Q127"/>
<dbReference type="GeneID" id="100009686"/>
<dbReference type="KEGG" id="ecb:100009686"/>
<dbReference type="CTD" id="1937"/>
<dbReference type="HOGENOM" id="CLU_011226_3_1_1"/>
<dbReference type="InParanoid" id="A2Q127"/>
<dbReference type="OrthoDB" id="249703at2759"/>
<dbReference type="TreeFam" id="TF314343"/>
<dbReference type="Proteomes" id="UP000002281">
    <property type="component" value="Unplaced"/>
</dbReference>
<dbReference type="GO" id="GO:0005737">
    <property type="term" value="C:cytoplasm"/>
    <property type="evidence" value="ECO:0000318"/>
    <property type="project" value="GO_Central"/>
</dbReference>
<dbReference type="GO" id="GO:0005634">
    <property type="term" value="C:nucleus"/>
    <property type="evidence" value="ECO:0000318"/>
    <property type="project" value="GO_Central"/>
</dbReference>
<dbReference type="GO" id="GO:0003746">
    <property type="term" value="F:translation elongation factor activity"/>
    <property type="evidence" value="ECO:0007669"/>
    <property type="project" value="UniProtKB-KW"/>
</dbReference>
<dbReference type="GO" id="GO:0006414">
    <property type="term" value="P:translational elongation"/>
    <property type="evidence" value="ECO:0000318"/>
    <property type="project" value="GO_Central"/>
</dbReference>
<dbReference type="CDD" id="cd03181">
    <property type="entry name" value="GST_C_EF1Bgamma_like"/>
    <property type="match status" value="1"/>
</dbReference>
<dbReference type="CDD" id="cd03044">
    <property type="entry name" value="GST_N_EF1Bgamma"/>
    <property type="match status" value="1"/>
</dbReference>
<dbReference type="FunFam" id="1.20.1050.10:FF:000021">
    <property type="entry name" value="Elongation factor 1-gamma"/>
    <property type="match status" value="1"/>
</dbReference>
<dbReference type="FunFam" id="3.40.30.10:FF:000088">
    <property type="entry name" value="Elongation factor 1-gamma"/>
    <property type="match status" value="1"/>
</dbReference>
<dbReference type="FunFam" id="3.30.70.1010:FF:000001">
    <property type="entry name" value="Elongation factor 1-gamma 1"/>
    <property type="match status" value="1"/>
</dbReference>
<dbReference type="Gene3D" id="1.20.1050.10">
    <property type="match status" value="1"/>
</dbReference>
<dbReference type="Gene3D" id="3.40.30.10">
    <property type="entry name" value="Glutaredoxin"/>
    <property type="match status" value="1"/>
</dbReference>
<dbReference type="Gene3D" id="3.30.70.1010">
    <property type="entry name" value="Translation elongation factor EF1B, gamma chain, conserved domain"/>
    <property type="match status" value="1"/>
</dbReference>
<dbReference type="InterPro" id="IPR050802">
    <property type="entry name" value="EF-GSTs"/>
</dbReference>
<dbReference type="InterPro" id="IPR001662">
    <property type="entry name" value="EF1B_G_C"/>
</dbReference>
<dbReference type="InterPro" id="IPR036433">
    <property type="entry name" value="EF1B_G_C_sf"/>
</dbReference>
<dbReference type="InterPro" id="IPR010987">
    <property type="entry name" value="Glutathione-S-Trfase_C-like"/>
</dbReference>
<dbReference type="InterPro" id="IPR036282">
    <property type="entry name" value="Glutathione-S-Trfase_C_sf"/>
</dbReference>
<dbReference type="InterPro" id="IPR040079">
    <property type="entry name" value="Glutathione_S-Trfase"/>
</dbReference>
<dbReference type="InterPro" id="IPR004045">
    <property type="entry name" value="Glutathione_S-Trfase_N"/>
</dbReference>
<dbReference type="InterPro" id="IPR004046">
    <property type="entry name" value="GST_C"/>
</dbReference>
<dbReference type="InterPro" id="IPR036249">
    <property type="entry name" value="Thioredoxin-like_sf"/>
</dbReference>
<dbReference type="PANTHER" id="PTHR43986">
    <property type="entry name" value="ELONGATION FACTOR 1-GAMMA"/>
    <property type="match status" value="1"/>
</dbReference>
<dbReference type="PANTHER" id="PTHR43986:SF1">
    <property type="entry name" value="ELONGATION FACTOR 1-GAMMA"/>
    <property type="match status" value="1"/>
</dbReference>
<dbReference type="Pfam" id="PF00647">
    <property type="entry name" value="EF1G"/>
    <property type="match status" value="1"/>
</dbReference>
<dbReference type="Pfam" id="PF00043">
    <property type="entry name" value="GST_C"/>
    <property type="match status" value="1"/>
</dbReference>
<dbReference type="Pfam" id="PF02798">
    <property type="entry name" value="GST_N"/>
    <property type="match status" value="1"/>
</dbReference>
<dbReference type="SFLD" id="SFLDS00019">
    <property type="entry name" value="Glutathione_Transferase_(cytos"/>
    <property type="match status" value="1"/>
</dbReference>
<dbReference type="SFLD" id="SFLDG00358">
    <property type="entry name" value="Main_(cytGST)"/>
    <property type="match status" value="1"/>
</dbReference>
<dbReference type="SMART" id="SM01183">
    <property type="entry name" value="EF1G"/>
    <property type="match status" value="1"/>
</dbReference>
<dbReference type="SUPFAM" id="SSF89942">
    <property type="entry name" value="eEF1-gamma domain"/>
    <property type="match status" value="1"/>
</dbReference>
<dbReference type="SUPFAM" id="SSF47616">
    <property type="entry name" value="GST C-terminal domain-like"/>
    <property type="match status" value="1"/>
</dbReference>
<dbReference type="SUPFAM" id="SSF52833">
    <property type="entry name" value="Thioredoxin-like"/>
    <property type="match status" value="1"/>
</dbReference>
<dbReference type="PROSITE" id="PS50040">
    <property type="entry name" value="EF1G_C"/>
    <property type="match status" value="1"/>
</dbReference>
<dbReference type="PROSITE" id="PS50405">
    <property type="entry name" value="GST_CTER"/>
    <property type="match status" value="1"/>
</dbReference>
<dbReference type="PROSITE" id="PS50404">
    <property type="entry name" value="GST_NTER"/>
    <property type="match status" value="1"/>
</dbReference>
<evidence type="ECO:0000250" key="1"/>
<evidence type="ECO:0000250" key="2">
    <source>
        <dbReference type="UniProtKB" id="P26641"/>
    </source>
</evidence>
<evidence type="ECO:0000250" key="3">
    <source>
        <dbReference type="UniProtKB" id="Q9D8N0"/>
    </source>
</evidence>
<evidence type="ECO:0000255" key="4">
    <source>
        <dbReference type="PROSITE-ProRule" id="PRU00519"/>
    </source>
</evidence>
<evidence type="ECO:0000256" key="5">
    <source>
        <dbReference type="SAM" id="MobiDB-lite"/>
    </source>
</evidence>
<organism>
    <name type="scientific">Equus caballus</name>
    <name type="common">Horse</name>
    <dbReference type="NCBI Taxonomy" id="9796"/>
    <lineage>
        <taxon>Eukaryota</taxon>
        <taxon>Metazoa</taxon>
        <taxon>Chordata</taxon>
        <taxon>Craniata</taxon>
        <taxon>Vertebrata</taxon>
        <taxon>Euteleostomi</taxon>
        <taxon>Mammalia</taxon>
        <taxon>Eutheria</taxon>
        <taxon>Laurasiatheria</taxon>
        <taxon>Perissodactyla</taxon>
        <taxon>Equidae</taxon>
        <taxon>Equus</taxon>
    </lineage>
</organism>
<name>EF1G_HORSE</name>